<gene>
    <name type="primary">kinY</name>
    <name type="ORF">DDB_G0289661</name>
</gene>
<name>KINY_DICDI</name>
<dbReference type="EC" id="2.7.11.1"/>
<dbReference type="EMBL" id="AJ271978">
    <property type="protein sequence ID" value="CAB85705.1"/>
    <property type="molecule type" value="mRNA"/>
</dbReference>
<dbReference type="EMBL" id="AAFI02000148">
    <property type="protein sequence ID" value="EAL62542.1"/>
    <property type="molecule type" value="Genomic_DNA"/>
</dbReference>
<dbReference type="RefSeq" id="XP_636113.1">
    <property type="nucleotide sequence ID" value="XM_631021.1"/>
</dbReference>
<dbReference type="SMR" id="Q54H05"/>
<dbReference type="FunCoup" id="Q54H05">
    <property type="interactions" value="20"/>
</dbReference>
<dbReference type="STRING" id="44689.Q54H05"/>
<dbReference type="PaxDb" id="44689-DDB0191400"/>
<dbReference type="EnsemblProtists" id="EAL62542">
    <property type="protein sequence ID" value="EAL62542"/>
    <property type="gene ID" value="DDB_G0289661"/>
</dbReference>
<dbReference type="GeneID" id="8627327"/>
<dbReference type="KEGG" id="ddi:DDB_G0289661"/>
<dbReference type="dictyBase" id="DDB_G0289661">
    <property type="gene designation" value="kinY"/>
</dbReference>
<dbReference type="VEuPathDB" id="AmoebaDB:DDB_G0289661"/>
<dbReference type="eggNOG" id="KOG0192">
    <property type="taxonomic scope" value="Eukaryota"/>
</dbReference>
<dbReference type="HOGENOM" id="CLU_471291_0_0_1"/>
<dbReference type="InParanoid" id="Q54H05"/>
<dbReference type="OMA" id="FIGVYYE"/>
<dbReference type="PhylomeDB" id="Q54H05"/>
<dbReference type="PRO" id="PR:Q54H05"/>
<dbReference type="Proteomes" id="UP000002195">
    <property type="component" value="Chromosome 5"/>
</dbReference>
<dbReference type="GO" id="GO:0005737">
    <property type="term" value="C:cytoplasm"/>
    <property type="evidence" value="ECO:0000318"/>
    <property type="project" value="GO_Central"/>
</dbReference>
<dbReference type="GO" id="GO:0005524">
    <property type="term" value="F:ATP binding"/>
    <property type="evidence" value="ECO:0007669"/>
    <property type="project" value="UniProtKB-KW"/>
</dbReference>
<dbReference type="GO" id="GO:0004672">
    <property type="term" value="F:protein kinase activity"/>
    <property type="evidence" value="ECO:0000318"/>
    <property type="project" value="GO_Central"/>
</dbReference>
<dbReference type="GO" id="GO:0106310">
    <property type="term" value="F:protein serine kinase activity"/>
    <property type="evidence" value="ECO:0007669"/>
    <property type="project" value="RHEA"/>
</dbReference>
<dbReference type="GO" id="GO:0004674">
    <property type="term" value="F:protein serine/threonine kinase activity"/>
    <property type="evidence" value="ECO:0007669"/>
    <property type="project" value="UniProtKB-KW"/>
</dbReference>
<dbReference type="GO" id="GO:0007165">
    <property type="term" value="P:signal transduction"/>
    <property type="evidence" value="ECO:0000318"/>
    <property type="project" value="GO_Central"/>
</dbReference>
<dbReference type="CDD" id="cd13999">
    <property type="entry name" value="STKc_MAP3K-like"/>
    <property type="match status" value="1"/>
</dbReference>
<dbReference type="Gene3D" id="3.30.200.20">
    <property type="entry name" value="Phosphorylase Kinase, domain 1"/>
    <property type="match status" value="1"/>
</dbReference>
<dbReference type="Gene3D" id="1.10.510.10">
    <property type="entry name" value="Transferase(Phosphotransferase) domain 1"/>
    <property type="match status" value="1"/>
</dbReference>
<dbReference type="InterPro" id="IPR050940">
    <property type="entry name" value="Actin_reg-Ser/Thr_kinase"/>
</dbReference>
<dbReference type="InterPro" id="IPR011009">
    <property type="entry name" value="Kinase-like_dom_sf"/>
</dbReference>
<dbReference type="InterPro" id="IPR000719">
    <property type="entry name" value="Prot_kinase_dom"/>
</dbReference>
<dbReference type="InterPro" id="IPR017441">
    <property type="entry name" value="Protein_kinase_ATP_BS"/>
</dbReference>
<dbReference type="InterPro" id="IPR001245">
    <property type="entry name" value="Ser-Thr/Tyr_kinase_cat_dom"/>
</dbReference>
<dbReference type="PANTHER" id="PTHR46485:SF5">
    <property type="entry name" value="CENTER DIVIDER, ISOFORM A"/>
    <property type="match status" value="1"/>
</dbReference>
<dbReference type="PANTHER" id="PTHR46485">
    <property type="entry name" value="LIM DOMAIN KINASE 1"/>
    <property type="match status" value="1"/>
</dbReference>
<dbReference type="Pfam" id="PF00069">
    <property type="entry name" value="Pkinase"/>
    <property type="match status" value="1"/>
</dbReference>
<dbReference type="PRINTS" id="PR00109">
    <property type="entry name" value="TYRKINASE"/>
</dbReference>
<dbReference type="SMART" id="SM00220">
    <property type="entry name" value="S_TKc"/>
    <property type="match status" value="1"/>
</dbReference>
<dbReference type="SUPFAM" id="SSF56112">
    <property type="entry name" value="Protein kinase-like (PK-like)"/>
    <property type="match status" value="1"/>
</dbReference>
<dbReference type="PROSITE" id="PS00107">
    <property type="entry name" value="PROTEIN_KINASE_ATP"/>
    <property type="match status" value="1"/>
</dbReference>
<dbReference type="PROSITE" id="PS50011">
    <property type="entry name" value="PROTEIN_KINASE_DOM"/>
    <property type="match status" value="1"/>
</dbReference>
<proteinExistence type="evidence at transcript level"/>
<comment type="catalytic activity">
    <reaction>
        <text>L-seryl-[protein] + ATP = O-phospho-L-seryl-[protein] + ADP + H(+)</text>
        <dbReference type="Rhea" id="RHEA:17989"/>
        <dbReference type="Rhea" id="RHEA-COMP:9863"/>
        <dbReference type="Rhea" id="RHEA-COMP:11604"/>
        <dbReference type="ChEBI" id="CHEBI:15378"/>
        <dbReference type="ChEBI" id="CHEBI:29999"/>
        <dbReference type="ChEBI" id="CHEBI:30616"/>
        <dbReference type="ChEBI" id="CHEBI:83421"/>
        <dbReference type="ChEBI" id="CHEBI:456216"/>
        <dbReference type="EC" id="2.7.11.1"/>
    </reaction>
</comment>
<comment type="catalytic activity">
    <reaction>
        <text>L-threonyl-[protein] + ATP = O-phospho-L-threonyl-[protein] + ADP + H(+)</text>
        <dbReference type="Rhea" id="RHEA:46608"/>
        <dbReference type="Rhea" id="RHEA-COMP:11060"/>
        <dbReference type="Rhea" id="RHEA-COMP:11605"/>
        <dbReference type="ChEBI" id="CHEBI:15378"/>
        <dbReference type="ChEBI" id="CHEBI:30013"/>
        <dbReference type="ChEBI" id="CHEBI:30616"/>
        <dbReference type="ChEBI" id="CHEBI:61977"/>
        <dbReference type="ChEBI" id="CHEBI:456216"/>
        <dbReference type="EC" id="2.7.11.1"/>
    </reaction>
</comment>
<comment type="developmental stage">
    <text evidence="3">Weakly expressed in vegetative cells. Expression increases during development until culmination. Higher levels detected during aggregation and culmination. Enriched in prespore cells.</text>
</comment>
<comment type="similarity">
    <text evidence="4">Belongs to the protein kinase superfamily. TKL Ser/Thr protein kinase family.</text>
</comment>
<evidence type="ECO:0000255" key="1">
    <source>
        <dbReference type="PROSITE-ProRule" id="PRU00159"/>
    </source>
</evidence>
<evidence type="ECO:0000256" key="2">
    <source>
        <dbReference type="SAM" id="MobiDB-lite"/>
    </source>
</evidence>
<evidence type="ECO:0000269" key="3">
    <source>
    </source>
</evidence>
<evidence type="ECO:0000305" key="4"/>
<accession>Q54H05</accession>
<accession>Q9NFR9</accession>
<organism>
    <name type="scientific">Dictyostelium discoideum</name>
    <name type="common">Social amoeba</name>
    <dbReference type="NCBI Taxonomy" id="44689"/>
    <lineage>
        <taxon>Eukaryota</taxon>
        <taxon>Amoebozoa</taxon>
        <taxon>Evosea</taxon>
        <taxon>Eumycetozoa</taxon>
        <taxon>Dictyostelia</taxon>
        <taxon>Dictyosteliales</taxon>
        <taxon>Dictyosteliaceae</taxon>
        <taxon>Dictyostelium</taxon>
    </lineage>
</organism>
<feature type="chain" id="PRO_0000355201" description="Probable serine/threonine-protein kinase kinY">
    <location>
        <begin position="1"/>
        <end position="579"/>
    </location>
</feature>
<feature type="domain" description="Protein kinase" evidence="1">
    <location>
        <begin position="32"/>
        <end position="309"/>
    </location>
</feature>
<feature type="region of interest" description="Disordered" evidence="2">
    <location>
        <begin position="1"/>
        <end position="24"/>
    </location>
</feature>
<feature type="active site" description="Proton acceptor" evidence="1">
    <location>
        <position position="167"/>
    </location>
</feature>
<feature type="binding site" evidence="1">
    <location>
        <begin position="38"/>
        <end position="46"/>
    </location>
    <ligand>
        <name>ATP</name>
        <dbReference type="ChEBI" id="CHEBI:30616"/>
    </ligand>
</feature>
<feature type="binding site" evidence="1">
    <location>
        <position position="59"/>
    </location>
    <ligand>
        <name>ATP</name>
        <dbReference type="ChEBI" id="CHEBI:30616"/>
    </ligand>
</feature>
<feature type="sequence conflict" description="In Ref. 1; CAB85705." evidence="4" ref="1">
    <original>H</original>
    <variation>Q</variation>
    <location>
        <position position="87"/>
    </location>
</feature>
<reference key="1">
    <citation type="journal article" date="2000" name="Biochim. Biophys. Acta">
        <title>Protein kinases from Dictyostelium discoideum with similarity to LIM kinases.</title>
        <authorList>
            <person name="Wetterauer B.W."/>
        </authorList>
    </citation>
    <scope>NUCLEOTIDE SEQUENCE [MRNA]</scope>
    <scope>DEVELOPMENTAL STAGE</scope>
    <source>
        <strain>AX2</strain>
    </source>
</reference>
<reference key="2">
    <citation type="journal article" date="2005" name="Nature">
        <title>The genome of the social amoeba Dictyostelium discoideum.</title>
        <authorList>
            <person name="Eichinger L."/>
            <person name="Pachebat J.A."/>
            <person name="Gloeckner G."/>
            <person name="Rajandream M.A."/>
            <person name="Sucgang R."/>
            <person name="Berriman M."/>
            <person name="Song J."/>
            <person name="Olsen R."/>
            <person name="Szafranski K."/>
            <person name="Xu Q."/>
            <person name="Tunggal B."/>
            <person name="Kummerfeld S."/>
            <person name="Madera M."/>
            <person name="Konfortov B.A."/>
            <person name="Rivero F."/>
            <person name="Bankier A.T."/>
            <person name="Lehmann R."/>
            <person name="Hamlin N."/>
            <person name="Davies R."/>
            <person name="Gaudet P."/>
            <person name="Fey P."/>
            <person name="Pilcher K."/>
            <person name="Chen G."/>
            <person name="Saunders D."/>
            <person name="Sodergren E.J."/>
            <person name="Davis P."/>
            <person name="Kerhornou A."/>
            <person name="Nie X."/>
            <person name="Hall N."/>
            <person name="Anjard C."/>
            <person name="Hemphill L."/>
            <person name="Bason N."/>
            <person name="Farbrother P."/>
            <person name="Desany B."/>
            <person name="Just E."/>
            <person name="Morio T."/>
            <person name="Rost R."/>
            <person name="Churcher C.M."/>
            <person name="Cooper J."/>
            <person name="Haydock S."/>
            <person name="van Driessche N."/>
            <person name="Cronin A."/>
            <person name="Goodhead I."/>
            <person name="Muzny D.M."/>
            <person name="Mourier T."/>
            <person name="Pain A."/>
            <person name="Lu M."/>
            <person name="Harper D."/>
            <person name="Lindsay R."/>
            <person name="Hauser H."/>
            <person name="James K.D."/>
            <person name="Quiles M."/>
            <person name="Madan Babu M."/>
            <person name="Saito T."/>
            <person name="Buchrieser C."/>
            <person name="Wardroper A."/>
            <person name="Felder M."/>
            <person name="Thangavelu M."/>
            <person name="Johnson D."/>
            <person name="Knights A."/>
            <person name="Loulseged H."/>
            <person name="Mungall K.L."/>
            <person name="Oliver K."/>
            <person name="Price C."/>
            <person name="Quail M.A."/>
            <person name="Urushihara H."/>
            <person name="Hernandez J."/>
            <person name="Rabbinowitsch E."/>
            <person name="Steffen D."/>
            <person name="Sanders M."/>
            <person name="Ma J."/>
            <person name="Kohara Y."/>
            <person name="Sharp S."/>
            <person name="Simmonds M.N."/>
            <person name="Spiegler S."/>
            <person name="Tivey A."/>
            <person name="Sugano S."/>
            <person name="White B."/>
            <person name="Walker D."/>
            <person name="Woodward J.R."/>
            <person name="Winckler T."/>
            <person name="Tanaka Y."/>
            <person name="Shaulsky G."/>
            <person name="Schleicher M."/>
            <person name="Weinstock G.M."/>
            <person name="Rosenthal A."/>
            <person name="Cox E.C."/>
            <person name="Chisholm R.L."/>
            <person name="Gibbs R.A."/>
            <person name="Loomis W.F."/>
            <person name="Platzer M."/>
            <person name="Kay R.R."/>
            <person name="Williams J.G."/>
            <person name="Dear P.H."/>
            <person name="Noegel A.A."/>
            <person name="Barrell B.G."/>
            <person name="Kuspa A."/>
        </authorList>
    </citation>
    <scope>NUCLEOTIDE SEQUENCE [LARGE SCALE GENOMIC DNA]</scope>
    <source>
        <strain>AX4</strain>
    </source>
</reference>
<sequence>MINGEQTMVEDELPDQGKPMSDESADIDIKDLKVGESIGSGAYGIVYRGTLFNSDVAIKKIQNEKSEKNEFIKYLKREVAVLKNIQHPNIVQFIGVYYEPLASPSLVNRLLNSSSTWIVTEYIGGGNLHERIKDTKKDFPIELRIKLSLDIALAMAYLHSRDIIFRDLKSKNILIDDSSSPIRGKVCDFGFARILNKKQQGNRHLSICGTDSIMAPELILGMEYDESVDIFSFGVVLLEMILRKKVSKVLERGPQSAFEIDQDSARQLIPDDIPVLYSDLALDCIKYQPEERPNFSHIIHVLKQLTSLFPVVHTFDNPLSPTSSPITPRKNSLNSPFTKSMRMNSFDFNLSNIVSSTSVQNNLKSQNLNFTLLNLNQINNQDLNENNNNNISNNINNINNNNNNLNDCNSNLSSSTSTIYNDSQQTIIDEDELDKEEEENRNKVNNLKEKMLLVMGEFDIYINKVGKELLLVSEEDHISQKYDECRKVIEIKKVLGEVIESDMSNSQQSNTPRKNSNVTNSRVALFLKSMERSLNEIYSSSDVLKQRIVKEDDLVESLLLARVVSKIKKIHLSSLDINN</sequence>
<keyword id="KW-0067">ATP-binding</keyword>
<keyword id="KW-0418">Kinase</keyword>
<keyword id="KW-0547">Nucleotide-binding</keyword>
<keyword id="KW-1185">Reference proteome</keyword>
<keyword id="KW-0723">Serine/threonine-protein kinase</keyword>
<keyword id="KW-0808">Transferase</keyword>
<protein>
    <recommendedName>
        <fullName>Probable serine/threonine-protein kinase kinY</fullName>
        <shortName>DdKinY</shortName>
        <ecNumber>2.7.11.1</ecNumber>
    </recommendedName>
</protein>